<accession>Q9LFQ0</accession>
<protein>
    <recommendedName>
        <fullName evidence="6">Beta-glucuronosyltransferase GlcAT14B</fullName>
        <ecNumber evidence="6">2.4.1.-</ecNumber>
    </recommendedName>
    <alternativeName>
        <fullName evidence="6">GT14 family glucuronic acid transferase 2</fullName>
        <shortName evidence="5">AtGlcAT14B</shortName>
    </alternativeName>
</protein>
<name>GT14B_ARATH</name>
<organism>
    <name type="scientific">Arabidopsis thaliana</name>
    <name type="common">Mouse-ear cress</name>
    <dbReference type="NCBI Taxonomy" id="3702"/>
    <lineage>
        <taxon>Eukaryota</taxon>
        <taxon>Viridiplantae</taxon>
        <taxon>Streptophyta</taxon>
        <taxon>Embryophyta</taxon>
        <taxon>Tracheophyta</taxon>
        <taxon>Spermatophyta</taxon>
        <taxon>Magnoliopsida</taxon>
        <taxon>eudicotyledons</taxon>
        <taxon>Gunneridae</taxon>
        <taxon>Pentapetalae</taxon>
        <taxon>rosids</taxon>
        <taxon>malvids</taxon>
        <taxon>Brassicales</taxon>
        <taxon>Brassicaceae</taxon>
        <taxon>Camelineae</taxon>
        <taxon>Arabidopsis</taxon>
    </lineage>
</organism>
<evidence type="ECO:0000250" key="1">
    <source>
        <dbReference type="UniProtKB" id="Q9FLD7"/>
    </source>
</evidence>
<evidence type="ECO:0000255" key="2"/>
<evidence type="ECO:0000255" key="3">
    <source>
        <dbReference type="PROSITE-ProRule" id="PRU00498"/>
    </source>
</evidence>
<evidence type="ECO:0000269" key="4">
    <source>
    </source>
</evidence>
<evidence type="ECO:0000303" key="5">
    <source>
    </source>
</evidence>
<evidence type="ECO:0000305" key="6"/>
<evidence type="ECO:0000312" key="7">
    <source>
        <dbReference type="Araport" id="AT5G15050"/>
    </source>
</evidence>
<evidence type="ECO:0000312" key="8">
    <source>
        <dbReference type="EMBL" id="CAC01824.1"/>
    </source>
</evidence>
<reference key="1">
    <citation type="journal article" date="2014" name="Plant J.">
        <title>The plant glycosyltransferase clone collection for functional genomics.</title>
        <authorList>
            <person name="Lao J."/>
            <person name="Oikawa A."/>
            <person name="Bromley J.R."/>
            <person name="McInerney P."/>
            <person name="Suttangkakul A."/>
            <person name="Smith-Moritz A.M."/>
            <person name="Plahar H."/>
            <person name="Chiu T.-Y."/>
            <person name="Gonzalez Fernandez-Nino S.M.G."/>
            <person name="Ebert B."/>
            <person name="Yang F."/>
            <person name="Christiansen K.M."/>
            <person name="Hansen S.F."/>
            <person name="Stonebloom S."/>
            <person name="Adams P.D."/>
            <person name="Ronald P.C."/>
            <person name="Hillson N.J."/>
            <person name="Hadi M.Z."/>
            <person name="Vega-Sanchez M.E."/>
            <person name="Loque D."/>
            <person name="Scheller H.V."/>
            <person name="Heazlewood J.L."/>
        </authorList>
    </citation>
    <scope>NUCLEOTIDE SEQUENCE [MRNA]</scope>
    <source>
        <strain>cv. Columbia</strain>
    </source>
</reference>
<reference key="2">
    <citation type="journal article" date="2000" name="Nature">
        <title>Sequence and analysis of chromosome 5 of the plant Arabidopsis thaliana.</title>
        <authorList>
            <person name="Tabata S."/>
            <person name="Kaneko T."/>
            <person name="Nakamura Y."/>
            <person name="Kotani H."/>
            <person name="Kato T."/>
            <person name="Asamizu E."/>
            <person name="Miyajima N."/>
            <person name="Sasamoto S."/>
            <person name="Kimura T."/>
            <person name="Hosouchi T."/>
            <person name="Kawashima K."/>
            <person name="Kohara M."/>
            <person name="Matsumoto M."/>
            <person name="Matsuno A."/>
            <person name="Muraki A."/>
            <person name="Nakayama S."/>
            <person name="Nakazaki N."/>
            <person name="Naruo K."/>
            <person name="Okumura S."/>
            <person name="Shinpo S."/>
            <person name="Takeuchi C."/>
            <person name="Wada T."/>
            <person name="Watanabe A."/>
            <person name="Yamada M."/>
            <person name="Yasuda M."/>
            <person name="Sato S."/>
            <person name="de la Bastide M."/>
            <person name="Huang E."/>
            <person name="Spiegel L."/>
            <person name="Gnoj L."/>
            <person name="O'Shaughnessy A."/>
            <person name="Preston R."/>
            <person name="Habermann K."/>
            <person name="Murray J."/>
            <person name="Johnson D."/>
            <person name="Rohlfing T."/>
            <person name="Nelson J."/>
            <person name="Stoneking T."/>
            <person name="Pepin K."/>
            <person name="Spieth J."/>
            <person name="Sekhon M."/>
            <person name="Armstrong J."/>
            <person name="Becker M."/>
            <person name="Belter E."/>
            <person name="Cordum H."/>
            <person name="Cordes M."/>
            <person name="Courtney L."/>
            <person name="Courtney W."/>
            <person name="Dante M."/>
            <person name="Du H."/>
            <person name="Edwards J."/>
            <person name="Fryman J."/>
            <person name="Haakensen B."/>
            <person name="Lamar E."/>
            <person name="Latreille P."/>
            <person name="Leonard S."/>
            <person name="Meyer R."/>
            <person name="Mulvaney E."/>
            <person name="Ozersky P."/>
            <person name="Riley A."/>
            <person name="Strowmatt C."/>
            <person name="Wagner-McPherson C."/>
            <person name="Wollam A."/>
            <person name="Yoakum M."/>
            <person name="Bell M."/>
            <person name="Dedhia N."/>
            <person name="Parnell L."/>
            <person name="Shah R."/>
            <person name="Rodriguez M."/>
            <person name="Hoon See L."/>
            <person name="Vil D."/>
            <person name="Baker J."/>
            <person name="Kirchoff K."/>
            <person name="Toth K."/>
            <person name="King L."/>
            <person name="Bahret A."/>
            <person name="Miller B."/>
            <person name="Marra M.A."/>
            <person name="Martienssen R."/>
            <person name="McCombie W.R."/>
            <person name="Wilson R.K."/>
            <person name="Murphy G."/>
            <person name="Bancroft I."/>
            <person name="Volckaert G."/>
            <person name="Wambutt R."/>
            <person name="Duesterhoeft A."/>
            <person name="Stiekema W."/>
            <person name="Pohl T."/>
            <person name="Entian K.-D."/>
            <person name="Terryn N."/>
            <person name="Hartley N."/>
            <person name="Bent E."/>
            <person name="Johnson S."/>
            <person name="Langham S.-A."/>
            <person name="McCullagh B."/>
            <person name="Robben J."/>
            <person name="Grymonprez B."/>
            <person name="Zimmermann W."/>
            <person name="Ramsperger U."/>
            <person name="Wedler H."/>
            <person name="Balke K."/>
            <person name="Wedler E."/>
            <person name="Peters S."/>
            <person name="van Staveren M."/>
            <person name="Dirkse W."/>
            <person name="Mooijman P."/>
            <person name="Klein Lankhorst R."/>
            <person name="Weitzenegger T."/>
            <person name="Bothe G."/>
            <person name="Rose M."/>
            <person name="Hauf J."/>
            <person name="Berneiser S."/>
            <person name="Hempel S."/>
            <person name="Feldpausch M."/>
            <person name="Lamberth S."/>
            <person name="Villarroel R."/>
            <person name="Gielen J."/>
            <person name="Ardiles W."/>
            <person name="Bents O."/>
            <person name="Lemcke K."/>
            <person name="Kolesov G."/>
            <person name="Mayer K.F.X."/>
            <person name="Rudd S."/>
            <person name="Schoof H."/>
            <person name="Schueller C."/>
            <person name="Zaccaria P."/>
            <person name="Mewes H.-W."/>
            <person name="Bevan M."/>
            <person name="Fransz P.F."/>
        </authorList>
    </citation>
    <scope>NUCLEOTIDE SEQUENCE [LARGE SCALE GENOMIC DNA]</scope>
    <source>
        <strain>cv. Columbia</strain>
    </source>
</reference>
<reference key="3">
    <citation type="journal article" date="2017" name="Plant J.">
        <title>Araport11: a complete reannotation of the Arabidopsis thaliana reference genome.</title>
        <authorList>
            <person name="Cheng C.Y."/>
            <person name="Krishnakumar V."/>
            <person name="Chan A.P."/>
            <person name="Thibaud-Nissen F."/>
            <person name="Schobel S."/>
            <person name="Town C.D."/>
        </authorList>
    </citation>
    <scope>GENOME REANNOTATION</scope>
    <source>
        <strain>cv. Columbia</strain>
    </source>
</reference>
<reference key="4">
    <citation type="journal article" date="2003" name="Science">
        <title>Empirical analysis of transcriptional activity in the Arabidopsis genome.</title>
        <authorList>
            <person name="Yamada K."/>
            <person name="Lim J."/>
            <person name="Dale J.M."/>
            <person name="Chen H."/>
            <person name="Shinn P."/>
            <person name="Palm C.J."/>
            <person name="Southwick A.M."/>
            <person name="Wu H.C."/>
            <person name="Kim C.J."/>
            <person name="Nguyen M."/>
            <person name="Pham P.K."/>
            <person name="Cheuk R.F."/>
            <person name="Karlin-Newmann G."/>
            <person name="Liu S.X."/>
            <person name="Lam B."/>
            <person name="Sakano H."/>
            <person name="Wu T."/>
            <person name="Yu G."/>
            <person name="Miranda M."/>
            <person name="Quach H.L."/>
            <person name="Tripp M."/>
            <person name="Chang C.H."/>
            <person name="Lee J.M."/>
            <person name="Toriumi M.J."/>
            <person name="Chan M.M."/>
            <person name="Tang C.C."/>
            <person name="Onodera C.S."/>
            <person name="Deng J.M."/>
            <person name="Akiyama K."/>
            <person name="Ansari Y."/>
            <person name="Arakawa T."/>
            <person name="Banh J."/>
            <person name="Banno F."/>
            <person name="Bowser L."/>
            <person name="Brooks S.Y."/>
            <person name="Carninci P."/>
            <person name="Chao Q."/>
            <person name="Choy N."/>
            <person name="Enju A."/>
            <person name="Goldsmith A.D."/>
            <person name="Gurjal M."/>
            <person name="Hansen N.F."/>
            <person name="Hayashizaki Y."/>
            <person name="Johnson-Hopson C."/>
            <person name="Hsuan V.W."/>
            <person name="Iida K."/>
            <person name="Karnes M."/>
            <person name="Khan S."/>
            <person name="Koesema E."/>
            <person name="Ishida J."/>
            <person name="Jiang P.X."/>
            <person name="Jones T."/>
            <person name="Kawai J."/>
            <person name="Kamiya A."/>
            <person name="Meyers C."/>
            <person name="Nakajima M."/>
            <person name="Narusaka M."/>
            <person name="Seki M."/>
            <person name="Sakurai T."/>
            <person name="Satou M."/>
            <person name="Tamse R."/>
            <person name="Vaysberg M."/>
            <person name="Wallender E.K."/>
            <person name="Wong C."/>
            <person name="Yamamura Y."/>
            <person name="Yuan S."/>
            <person name="Shinozaki K."/>
            <person name="Davis R.W."/>
            <person name="Theologis A."/>
            <person name="Ecker J.R."/>
        </authorList>
    </citation>
    <scope>NUCLEOTIDE SEQUENCE [LARGE SCALE MRNA]</scope>
    <source>
        <strain>cv. Columbia</strain>
    </source>
</reference>
<reference key="5">
    <citation type="submission" date="2002-03" db="EMBL/GenBank/DDBJ databases">
        <title>Full-length cDNA from Arabidopsis thaliana.</title>
        <authorList>
            <person name="Brover V.V."/>
            <person name="Troukhan M.E."/>
            <person name="Alexandrov N.A."/>
            <person name="Lu Y.-P."/>
            <person name="Flavell R.B."/>
            <person name="Feldmann K.A."/>
        </authorList>
    </citation>
    <scope>NUCLEOTIDE SEQUENCE [LARGE SCALE MRNA]</scope>
</reference>
<reference key="6">
    <citation type="journal article" date="2014" name="Plant Signal. Behav.">
        <title>Arabidopsis thaliana glucuronosyltransferase in family GT14.</title>
        <authorList>
            <person name="Dilokpimol A."/>
            <person name="Geshi N."/>
        </authorList>
    </citation>
    <scope>FUNCTION</scope>
</reference>
<comment type="function">
    <text evidence="4">Beta-glucuronosyltransferase involved in the biosynthesis of type II arabinogalactan (AG). Modifies both the beta-1,6-linked galactan and beta-1,3-linked galactan present in type II AG.</text>
</comment>
<comment type="subcellular location">
    <subcellularLocation>
        <location evidence="1">Golgi apparatus membrane</location>
        <topology evidence="6">Single-pass type II membrane protein</topology>
    </subcellularLocation>
</comment>
<comment type="similarity">
    <text evidence="6">Belongs to the glycosyltransferase 14 family.</text>
</comment>
<sequence length="434" mass="49583">MKKLKSYYMQVRNQQQSLDRKWILPLAIGSICSLFLLLLTNLASSSGQTRLIPFSVYGFRSSVFVESKINPVSVSLTVSVSPPPPPRLAYLISGSSGDGQMLKRTLMALYHPNNQYVVHLDRESSPEERLDLSGFVANHTLFQRFQNVRMIVKANFVTYRGPTMVANTLHAAAILLREGGDWDWFINLSASDYPLVTQDDLLHTFSYLPRDLNFIDHTSNIGWKESHRAKPIIIDPGLYMSKKADVFWVSQKRSMPTAFKLFTGSAWMMLSRPFVDYFIWGWDNLPRIVLMYYANFLSSPEGYFHTVICNAREFTNTTVNSDLHFISWDNPPKQHPHHLTLDDFQRMVDSNAPFARKFRRDEPVLDKIDSELLFRSHGMVTPGGWCIGTRENGSDPCAVIGDTSVIKPGLGAKRIEKLITYLLSTENFRPRQCR</sequence>
<feature type="chain" id="PRO_0000434321" description="Beta-glucuronosyltransferase GlcAT14B">
    <location>
        <begin position="1"/>
        <end position="434"/>
    </location>
</feature>
<feature type="topological domain" description="Cytoplasmic" evidence="6">
    <location>
        <begin position="1"/>
        <end position="21"/>
    </location>
</feature>
<feature type="transmembrane region" description="Signal-anchor for type II membrane protein" evidence="2">
    <location>
        <begin position="22"/>
        <end position="42"/>
    </location>
</feature>
<feature type="topological domain" description="Lumenal" evidence="6">
    <location>
        <begin position="43"/>
        <end position="434"/>
    </location>
</feature>
<feature type="glycosylation site" description="N-linked (GlcNAc...) asparagine" evidence="3">
    <location>
        <position position="138"/>
    </location>
</feature>
<feature type="glycosylation site" description="N-linked (GlcNAc...) asparagine" evidence="3">
    <location>
        <position position="187"/>
    </location>
</feature>
<feature type="glycosylation site" description="N-linked (GlcNAc...) asparagine" evidence="3">
    <location>
        <position position="316"/>
    </location>
</feature>
<feature type="glycosylation site" description="N-linked (GlcNAc...) asparagine" evidence="3">
    <location>
        <position position="392"/>
    </location>
</feature>
<gene>
    <name evidence="5" type="primary">GLCAT14B</name>
    <name evidence="7" type="ordered locus">At5g15050</name>
    <name evidence="8" type="ORF">F2G14.170</name>
</gene>
<keyword id="KW-0325">Glycoprotein</keyword>
<keyword id="KW-0328">Glycosyltransferase</keyword>
<keyword id="KW-0333">Golgi apparatus</keyword>
<keyword id="KW-0472">Membrane</keyword>
<keyword id="KW-1185">Reference proteome</keyword>
<keyword id="KW-0735">Signal-anchor</keyword>
<keyword id="KW-0808">Transferase</keyword>
<keyword id="KW-0812">Transmembrane</keyword>
<keyword id="KW-1133">Transmembrane helix</keyword>
<proteinExistence type="evidence at transcript level"/>
<dbReference type="EC" id="2.4.1.-" evidence="6"/>
<dbReference type="EMBL" id="KJ138690">
    <property type="protein sequence ID" value="AHL38630.1"/>
    <property type="molecule type" value="mRNA"/>
</dbReference>
<dbReference type="EMBL" id="AL391146">
    <property type="protein sequence ID" value="CAC01824.1"/>
    <property type="molecule type" value="Genomic_DNA"/>
</dbReference>
<dbReference type="EMBL" id="CP002688">
    <property type="protein sequence ID" value="AED92110.1"/>
    <property type="molecule type" value="Genomic_DNA"/>
</dbReference>
<dbReference type="EMBL" id="AY057600">
    <property type="protein sequence ID" value="AAL14395.1"/>
    <property type="molecule type" value="mRNA"/>
</dbReference>
<dbReference type="EMBL" id="AY124832">
    <property type="protein sequence ID" value="AAM70541.1"/>
    <property type="molecule type" value="mRNA"/>
</dbReference>
<dbReference type="EMBL" id="AY086423">
    <property type="protein sequence ID" value="AAM63425.1"/>
    <property type="molecule type" value="mRNA"/>
</dbReference>
<dbReference type="PIR" id="T51450">
    <property type="entry name" value="T51450"/>
</dbReference>
<dbReference type="RefSeq" id="NP_197009.1">
    <property type="nucleotide sequence ID" value="NM_121509.3"/>
</dbReference>
<dbReference type="SMR" id="Q9LFQ0"/>
<dbReference type="FunCoup" id="Q9LFQ0">
    <property type="interactions" value="31"/>
</dbReference>
<dbReference type="STRING" id="3702.Q9LFQ0"/>
<dbReference type="CAZy" id="GT14">
    <property type="family name" value="Glycosyltransferase Family 14"/>
</dbReference>
<dbReference type="GlyCosmos" id="Q9LFQ0">
    <property type="glycosylation" value="4 sites, No reported glycans"/>
</dbReference>
<dbReference type="GlyGen" id="Q9LFQ0">
    <property type="glycosylation" value="5 sites"/>
</dbReference>
<dbReference type="PaxDb" id="3702-AT5G15050.1"/>
<dbReference type="ProteomicsDB" id="247224"/>
<dbReference type="EnsemblPlants" id="AT5G15050.1">
    <property type="protein sequence ID" value="AT5G15050.1"/>
    <property type="gene ID" value="AT5G15050"/>
</dbReference>
<dbReference type="GeneID" id="831357"/>
<dbReference type="Gramene" id="AT5G15050.1">
    <property type="protein sequence ID" value="AT5G15050.1"/>
    <property type="gene ID" value="AT5G15050"/>
</dbReference>
<dbReference type="KEGG" id="ath:AT5G15050"/>
<dbReference type="Araport" id="AT5G15050"/>
<dbReference type="TAIR" id="AT5G15050">
    <property type="gene designation" value="GLCAT14B"/>
</dbReference>
<dbReference type="eggNOG" id="KOG0799">
    <property type="taxonomic scope" value="Eukaryota"/>
</dbReference>
<dbReference type="HOGENOM" id="CLU_034994_0_0_1"/>
<dbReference type="InParanoid" id="Q9LFQ0"/>
<dbReference type="OMA" id="IMESKWI"/>
<dbReference type="PhylomeDB" id="Q9LFQ0"/>
<dbReference type="PRO" id="PR:Q9LFQ0"/>
<dbReference type="Proteomes" id="UP000006548">
    <property type="component" value="Chromosome 5"/>
</dbReference>
<dbReference type="ExpressionAtlas" id="Q9LFQ0">
    <property type="expression patterns" value="baseline and differential"/>
</dbReference>
<dbReference type="GO" id="GO:0000139">
    <property type="term" value="C:Golgi membrane"/>
    <property type="evidence" value="ECO:0007669"/>
    <property type="project" value="UniProtKB-SubCell"/>
</dbReference>
<dbReference type="GO" id="GO:0015020">
    <property type="term" value="F:glucuronosyltransferase activity"/>
    <property type="evidence" value="ECO:0000314"/>
    <property type="project" value="TAIR"/>
</dbReference>
<dbReference type="InterPro" id="IPR044610">
    <property type="entry name" value="GLCAT14A/B/C"/>
</dbReference>
<dbReference type="InterPro" id="IPR003406">
    <property type="entry name" value="Glyco_trans_14"/>
</dbReference>
<dbReference type="PANTHER" id="PTHR45719:SF38">
    <property type="entry name" value="BETA-GLUCURONOSYLTRANSFERASE GLCAT14B"/>
    <property type="match status" value="1"/>
</dbReference>
<dbReference type="PANTHER" id="PTHR45719">
    <property type="entry name" value="GLYCOSYLTRANSFERASE"/>
    <property type="match status" value="1"/>
</dbReference>
<dbReference type="Pfam" id="PF02485">
    <property type="entry name" value="Branch"/>
    <property type="match status" value="1"/>
</dbReference>